<protein>
    <recommendedName>
        <fullName>Probable non-intrinsic ABC protein 5</fullName>
    </recommendedName>
    <alternativeName>
        <fullName>MRP-related protein 2</fullName>
    </alternativeName>
</protein>
<sequence length="324" mass="35811">MDRERYDKVIEACSLSKDLEILSFGDQTVIGERGINLSGGQKQRIHIARALYQDADIYLFDDPFSAVDAHTGSHLFKEALRGLLCSKSVIYVTHQVEFLPSADLTLVMKDGRISQAGKYNDILISGTDFRELIGAHQESLAVVGSADASSVSENSALDEENGVVRDDIGFDGKQESQDLKNDKLDSGEPQRQFVQEEERAKGSVALDVYWKYITLAYGGALVPFILLGQILFQLLQIGSNYWMAWATPISEDVQAPVKLSTLMVVYVALAFGSSLCILVRATLLVTAGYKTATELFHKMHHCIFRSPMSFKIAKTCSKTCIYSS</sequence>
<evidence type="ECO:0000255" key="1">
    <source>
        <dbReference type="PROSITE-ProRule" id="PRU00441"/>
    </source>
</evidence>
<evidence type="ECO:0000305" key="2"/>
<keyword id="KW-0067">ATP-binding</keyword>
<keyword id="KW-0472">Membrane</keyword>
<keyword id="KW-0547">Nucleotide-binding</keyword>
<keyword id="KW-1185">Reference proteome</keyword>
<keyword id="KW-0812">Transmembrane</keyword>
<keyword id="KW-1133">Transmembrane helix</keyword>
<keyword id="KW-0813">Transport</keyword>
<name>NAP5_ARATH</name>
<gene>
    <name type="primary">NAP5</name>
    <name type="ordered locus">At1g71330</name>
    <name type="ORF">F3I17.2</name>
</gene>
<reference key="1">
    <citation type="journal article" date="2000" name="Nature">
        <title>Sequence and analysis of chromosome 1 of the plant Arabidopsis thaliana.</title>
        <authorList>
            <person name="Theologis A."/>
            <person name="Ecker J.R."/>
            <person name="Palm C.J."/>
            <person name="Federspiel N.A."/>
            <person name="Kaul S."/>
            <person name="White O."/>
            <person name="Alonso J."/>
            <person name="Altafi H."/>
            <person name="Araujo R."/>
            <person name="Bowman C.L."/>
            <person name="Brooks S.Y."/>
            <person name="Buehler E."/>
            <person name="Chan A."/>
            <person name="Chao Q."/>
            <person name="Chen H."/>
            <person name="Cheuk R.F."/>
            <person name="Chin C.W."/>
            <person name="Chung M.K."/>
            <person name="Conn L."/>
            <person name="Conway A.B."/>
            <person name="Conway A.R."/>
            <person name="Creasy T.H."/>
            <person name="Dewar K."/>
            <person name="Dunn P."/>
            <person name="Etgu P."/>
            <person name="Feldblyum T.V."/>
            <person name="Feng J.-D."/>
            <person name="Fong B."/>
            <person name="Fujii C.Y."/>
            <person name="Gill J.E."/>
            <person name="Goldsmith A.D."/>
            <person name="Haas B."/>
            <person name="Hansen N.F."/>
            <person name="Hughes B."/>
            <person name="Huizar L."/>
            <person name="Hunter J.L."/>
            <person name="Jenkins J."/>
            <person name="Johnson-Hopson C."/>
            <person name="Khan S."/>
            <person name="Khaykin E."/>
            <person name="Kim C.J."/>
            <person name="Koo H.L."/>
            <person name="Kremenetskaia I."/>
            <person name="Kurtz D.B."/>
            <person name="Kwan A."/>
            <person name="Lam B."/>
            <person name="Langin-Hooper S."/>
            <person name="Lee A."/>
            <person name="Lee J.M."/>
            <person name="Lenz C.A."/>
            <person name="Li J.H."/>
            <person name="Li Y.-P."/>
            <person name="Lin X."/>
            <person name="Liu S.X."/>
            <person name="Liu Z.A."/>
            <person name="Luros J.S."/>
            <person name="Maiti R."/>
            <person name="Marziali A."/>
            <person name="Militscher J."/>
            <person name="Miranda M."/>
            <person name="Nguyen M."/>
            <person name="Nierman W.C."/>
            <person name="Osborne B.I."/>
            <person name="Pai G."/>
            <person name="Peterson J."/>
            <person name="Pham P.K."/>
            <person name="Rizzo M."/>
            <person name="Rooney T."/>
            <person name="Rowley D."/>
            <person name="Sakano H."/>
            <person name="Salzberg S.L."/>
            <person name="Schwartz J.R."/>
            <person name="Shinn P."/>
            <person name="Southwick A.M."/>
            <person name="Sun H."/>
            <person name="Tallon L.J."/>
            <person name="Tambunga G."/>
            <person name="Toriumi M.J."/>
            <person name="Town C.D."/>
            <person name="Utterback T."/>
            <person name="Van Aken S."/>
            <person name="Vaysberg M."/>
            <person name="Vysotskaia V.S."/>
            <person name="Walker M."/>
            <person name="Wu D."/>
            <person name="Yu G."/>
            <person name="Fraser C.M."/>
            <person name="Venter J.C."/>
            <person name="Davis R.W."/>
        </authorList>
    </citation>
    <scope>NUCLEOTIDE SEQUENCE [LARGE SCALE GENOMIC DNA]</scope>
    <source>
        <strain>cv. Columbia</strain>
    </source>
</reference>
<reference key="2">
    <citation type="journal article" date="2017" name="Plant J.">
        <title>Araport11: a complete reannotation of the Arabidopsis thaliana reference genome.</title>
        <authorList>
            <person name="Cheng C.Y."/>
            <person name="Krishnakumar V."/>
            <person name="Chan A.P."/>
            <person name="Thibaud-Nissen F."/>
            <person name="Schobel S."/>
            <person name="Town C.D."/>
        </authorList>
    </citation>
    <scope>GENOME REANNOTATION</scope>
    <source>
        <strain>cv. Columbia</strain>
    </source>
</reference>
<reference key="3">
    <citation type="journal article" date="2001" name="J. Biol. Chem.">
        <title>The Arabidopsis thaliana ABC protein superfamily, a complete inventory.</title>
        <authorList>
            <person name="Sanchez-Fernandez R."/>
            <person name="Davies T.G."/>
            <person name="Coleman J.O."/>
            <person name="Rea P.A."/>
        </authorList>
    </citation>
    <scope>GENE FAMILY</scope>
    <scope>NOMENCLATURE</scope>
</reference>
<reference key="4">
    <citation type="journal article" date="2008" name="Trends Plant Sci.">
        <title>Plant ABC proteins - a unified nomenclature and updated inventory.</title>
        <authorList>
            <person name="Verrier P.J."/>
            <person name="Bird D."/>
            <person name="Burla B."/>
            <person name="Dassa E."/>
            <person name="Forestier C."/>
            <person name="Geisler M."/>
            <person name="Klein M."/>
            <person name="Kolukisaoglu H.U."/>
            <person name="Lee Y."/>
            <person name="Martinoia E."/>
            <person name="Murphy A."/>
            <person name="Rea P.A."/>
            <person name="Samuels L."/>
            <person name="Schulz B."/>
            <person name="Spalding E.J."/>
            <person name="Yazaki K."/>
            <person name="Theodoulou F.L."/>
        </authorList>
    </citation>
    <scope>GENE FAMILY</scope>
    <scope>NOMENCLATURE</scope>
</reference>
<proteinExistence type="evidence at transcript level"/>
<organism>
    <name type="scientific">Arabidopsis thaliana</name>
    <name type="common">Mouse-ear cress</name>
    <dbReference type="NCBI Taxonomy" id="3702"/>
    <lineage>
        <taxon>Eukaryota</taxon>
        <taxon>Viridiplantae</taxon>
        <taxon>Streptophyta</taxon>
        <taxon>Embryophyta</taxon>
        <taxon>Tracheophyta</taxon>
        <taxon>Spermatophyta</taxon>
        <taxon>Magnoliopsida</taxon>
        <taxon>eudicotyledons</taxon>
        <taxon>Gunneridae</taxon>
        <taxon>Pentapetalae</taxon>
        <taxon>rosids</taxon>
        <taxon>malvids</taxon>
        <taxon>Brassicales</taxon>
        <taxon>Brassicaceae</taxon>
        <taxon>Camelineae</taxon>
        <taxon>Arabidopsis</taxon>
    </lineage>
</organism>
<comment type="subcellular location">
    <subcellularLocation>
        <location evidence="1">Membrane</location>
        <topology evidence="1">Multi-pass membrane protein</topology>
    </subcellularLocation>
</comment>
<comment type="similarity">
    <text evidence="2">Belongs to the ABC transporter superfamily.</text>
</comment>
<feature type="chain" id="PRO_0000250657" description="Probable non-intrinsic ABC protein 5">
    <location>
        <begin position="1"/>
        <end position="324"/>
    </location>
</feature>
<feature type="transmembrane region" description="Helical" evidence="1">
    <location>
        <begin position="212"/>
        <end position="232"/>
    </location>
</feature>
<feature type="transmembrane region" description="Helical" evidence="1">
    <location>
        <begin position="259"/>
        <end position="279"/>
    </location>
</feature>
<feature type="domain" description="ABC transporter">
    <location>
        <begin position="2"/>
        <end position="111"/>
    </location>
</feature>
<feature type="domain" description="ABC transmembrane type-1" evidence="1">
    <location>
        <begin position="222"/>
        <end position="324"/>
    </location>
</feature>
<dbReference type="EMBL" id="AC016162">
    <property type="protein sequence ID" value="AAG51884.1"/>
    <property type="molecule type" value="Genomic_DNA"/>
</dbReference>
<dbReference type="EMBL" id="CP002684">
    <property type="protein sequence ID" value="AEE35190.1"/>
    <property type="molecule type" value="Genomic_DNA"/>
</dbReference>
<dbReference type="PIR" id="B96738">
    <property type="entry name" value="B96738"/>
</dbReference>
<dbReference type="RefSeq" id="NP_177289.1">
    <property type="nucleotide sequence ID" value="NM_105802.1"/>
</dbReference>
<dbReference type="SMR" id="Q9FVV9"/>
<dbReference type="BioGRID" id="28694">
    <property type="interactions" value="38"/>
</dbReference>
<dbReference type="IntAct" id="Q9FVV9">
    <property type="interactions" value="38"/>
</dbReference>
<dbReference type="STRING" id="3702.Q9FVV9"/>
<dbReference type="iPTMnet" id="Q9FVV9"/>
<dbReference type="PaxDb" id="3702-AT1G71330.1"/>
<dbReference type="EnsemblPlants" id="AT1G71330.1">
    <property type="protein sequence ID" value="AT1G71330.1"/>
    <property type="gene ID" value="AT1G71330"/>
</dbReference>
<dbReference type="GeneID" id="843474"/>
<dbReference type="Gramene" id="AT1G71330.1">
    <property type="protein sequence ID" value="AT1G71330.1"/>
    <property type="gene ID" value="AT1G71330"/>
</dbReference>
<dbReference type="KEGG" id="ath:AT1G71330"/>
<dbReference type="Araport" id="AT1G71330"/>
<dbReference type="TAIR" id="AT1G71330">
    <property type="gene designation" value="NAP5"/>
</dbReference>
<dbReference type="eggNOG" id="KOG0054">
    <property type="taxonomic scope" value="Eukaryota"/>
</dbReference>
<dbReference type="HOGENOM" id="CLU_000604_27_9_1"/>
<dbReference type="InParanoid" id="Q9FVV9"/>
<dbReference type="OMA" id="WIWDIEI"/>
<dbReference type="PhylomeDB" id="Q9FVV9"/>
<dbReference type="BioCyc" id="ARA:AT1G71330-MONOMER"/>
<dbReference type="PRO" id="PR:Q9FVV9"/>
<dbReference type="Proteomes" id="UP000006548">
    <property type="component" value="Chromosome 1"/>
</dbReference>
<dbReference type="ExpressionAtlas" id="Q9FVV9">
    <property type="expression patterns" value="baseline and differential"/>
</dbReference>
<dbReference type="GO" id="GO:0016020">
    <property type="term" value="C:membrane"/>
    <property type="evidence" value="ECO:0007669"/>
    <property type="project" value="UniProtKB-SubCell"/>
</dbReference>
<dbReference type="GO" id="GO:0140359">
    <property type="term" value="F:ABC-type transporter activity"/>
    <property type="evidence" value="ECO:0007669"/>
    <property type="project" value="InterPro"/>
</dbReference>
<dbReference type="GO" id="GO:0005524">
    <property type="term" value="F:ATP binding"/>
    <property type="evidence" value="ECO:0007669"/>
    <property type="project" value="UniProtKB-KW"/>
</dbReference>
<dbReference type="GO" id="GO:0016887">
    <property type="term" value="F:ATP hydrolysis activity"/>
    <property type="evidence" value="ECO:0007669"/>
    <property type="project" value="InterPro"/>
</dbReference>
<dbReference type="GO" id="GO:0042626">
    <property type="term" value="F:ATPase-coupled transmembrane transporter activity"/>
    <property type="evidence" value="ECO:0000250"/>
    <property type="project" value="TAIR"/>
</dbReference>
<dbReference type="FunFam" id="3.40.50.300:FF:004043">
    <property type="entry name" value="Probable non-intrinsic ABC protein 5"/>
    <property type="match status" value="1"/>
</dbReference>
<dbReference type="Gene3D" id="1.20.1560.10">
    <property type="entry name" value="ABC transporter type 1, transmembrane domain"/>
    <property type="match status" value="1"/>
</dbReference>
<dbReference type="Gene3D" id="3.40.50.300">
    <property type="entry name" value="P-loop containing nucleotide triphosphate hydrolases"/>
    <property type="match status" value="1"/>
</dbReference>
<dbReference type="InterPro" id="IPR011527">
    <property type="entry name" value="ABC1_TM_dom"/>
</dbReference>
<dbReference type="InterPro" id="IPR036640">
    <property type="entry name" value="ABC1_TM_sf"/>
</dbReference>
<dbReference type="InterPro" id="IPR003439">
    <property type="entry name" value="ABC_transporter-like_ATP-bd"/>
</dbReference>
<dbReference type="InterPro" id="IPR050173">
    <property type="entry name" value="ABC_transporter_C-like"/>
</dbReference>
<dbReference type="InterPro" id="IPR027417">
    <property type="entry name" value="P-loop_NTPase"/>
</dbReference>
<dbReference type="PANTHER" id="PTHR24223:SF181">
    <property type="entry name" value="ABC TRANSPORTER C FAMILY MEMBER 3"/>
    <property type="match status" value="1"/>
</dbReference>
<dbReference type="PANTHER" id="PTHR24223">
    <property type="entry name" value="ATP-BINDING CASSETTE SUB-FAMILY C"/>
    <property type="match status" value="1"/>
</dbReference>
<dbReference type="Pfam" id="PF00005">
    <property type="entry name" value="ABC_tran"/>
    <property type="match status" value="1"/>
</dbReference>
<dbReference type="SUPFAM" id="SSF90123">
    <property type="entry name" value="ABC transporter transmembrane region"/>
    <property type="match status" value="1"/>
</dbReference>
<dbReference type="SUPFAM" id="SSF52540">
    <property type="entry name" value="P-loop containing nucleoside triphosphate hydrolases"/>
    <property type="match status" value="1"/>
</dbReference>
<dbReference type="PROSITE" id="PS50929">
    <property type="entry name" value="ABC_TM1F"/>
    <property type="match status" value="1"/>
</dbReference>
<accession>Q9FVV9</accession>